<organism>
    <name type="scientific">Mus musculus</name>
    <name type="common">Mouse</name>
    <dbReference type="NCBI Taxonomy" id="10090"/>
    <lineage>
        <taxon>Eukaryota</taxon>
        <taxon>Metazoa</taxon>
        <taxon>Chordata</taxon>
        <taxon>Craniata</taxon>
        <taxon>Vertebrata</taxon>
        <taxon>Euteleostomi</taxon>
        <taxon>Mammalia</taxon>
        <taxon>Eutheria</taxon>
        <taxon>Euarchontoglires</taxon>
        <taxon>Glires</taxon>
        <taxon>Rodentia</taxon>
        <taxon>Myomorpha</taxon>
        <taxon>Muroidea</taxon>
        <taxon>Muridae</taxon>
        <taxon>Murinae</taxon>
        <taxon>Mus</taxon>
        <taxon>Mus</taxon>
    </lineage>
</organism>
<sequence length="509" mass="57805">MLCQPAMLLDGLLLLATMAAAQHRGPEAGGHRQIHQVRRGQCSYTFVVPEPDICQLAPTAAPEALGGSNSLQRDLPASRLHLTDWRAQRAQRAQRVSQLEKILENNTQWLLKLEQSIKVNLRSHLVQAQQDTIQNQTTTMLALGANLMNQTKAQTHKLTAVEAQVLNQTLHMKTQMLENSLSTNKLERQMLMQSRELQRLQGRNRALETRLQALEAQHQAQLNSLQEKREQLHSLLGHQTGTLANLKHNLHALSSNSSSLQQQQQQLTEFVQRLVRIVAQDQHPVSLKTPKPVFQDCAEIKRSGVNTSGVYTIYETNMTKPLKVFCDMETDGGGWTLIQHREDGSVNFQRTWEEYKEGFGNVAREHWLGNEAVHRLTSRTAYLLRVELHDWEGRQTSIQYENFQLGSERQRYSLSVNDSSSSAGRKNSLAPQGTKFSTKDMDNDNCMCKCAQMLSGGWWFDACGLSNLNGIYYSVHQHLHKINGIRWHYFRGPSYSLHGTRMMLRPMGA</sequence>
<gene>
    <name type="primary">Angpt4</name>
    <name type="synonym">Agpt4</name>
    <name type="synonym">Ang3</name>
</gene>
<protein>
    <recommendedName>
        <fullName>Angiopoietin-4</fullName>
        <shortName>ANG-4</shortName>
    </recommendedName>
    <alternativeName>
        <fullName>Angiopoietin-3</fullName>
        <shortName>ANG-3</shortName>
    </alternativeName>
</protein>
<proteinExistence type="evidence at protein level"/>
<keyword id="KW-0037">Angiogenesis</keyword>
<keyword id="KW-0175">Coiled coil</keyword>
<keyword id="KW-1015">Disulfide bond</keyword>
<keyword id="KW-0325">Glycoprotein</keyword>
<keyword id="KW-1185">Reference proteome</keyword>
<keyword id="KW-0964">Secreted</keyword>
<keyword id="KW-0732">Signal</keyword>
<reference key="1">
    <citation type="journal article" date="1999" name="Proc. Natl. Acad. Sci. U.S.A.">
        <title>Angiopoietins 3 and 4: diverging gene counterparts in mice and humans.</title>
        <authorList>
            <person name="Valenzuela D.M."/>
            <person name="Griffiths J.A."/>
            <person name="Rojas J."/>
            <person name="Aldrich T.H."/>
            <person name="Jones P.F."/>
            <person name="Zhou H."/>
            <person name="McClain J."/>
            <person name="Copeland N.G."/>
            <person name="Gilbert D.J."/>
            <person name="Jenkins N.A."/>
            <person name="Huang T."/>
            <person name="Papadopoulos N."/>
            <person name="Maisonpierre P.C."/>
            <person name="Davis S."/>
            <person name="Yancopoulos G.D."/>
        </authorList>
    </citation>
    <scope>NUCLEOTIDE SEQUENCE [MRNA]</scope>
    <source>
        <tissue>Myoblast</tissue>
        <tissue>Uterus</tissue>
    </source>
</reference>
<reference key="2">
    <citation type="journal article" date="2004" name="FASEB J.">
        <title>Biological characterization of angiopoietin-3 and angiopoietin-4.</title>
        <authorList>
            <person name="Lee H.J."/>
            <person name="Cho C.H."/>
            <person name="Hwang S.J."/>
            <person name="Choi H.H."/>
            <person name="Kim K.T."/>
            <person name="Ahn S.Y."/>
            <person name="Kim J.H."/>
            <person name="Oh J.L."/>
            <person name="Lee G.M."/>
            <person name="Koh G.Y."/>
        </authorList>
    </citation>
    <scope>FUNCTION IN REGULATION OF ANGIOGENESIS; CELL SURVIVAL; CELL MIGRATION AND ACTIVATION OF AKT1</scope>
    <scope>INTERACTION WITH TEK/TIE2</scope>
</reference>
<feature type="signal peptide" evidence="1">
    <location>
        <begin position="1"/>
        <end position="21"/>
    </location>
</feature>
<feature type="chain" id="PRO_0000009117" description="Angiopoietin-4">
    <location>
        <begin position="22"/>
        <end position="509"/>
    </location>
</feature>
<feature type="domain" description="Fibrinogen C-terminal" evidence="2">
    <location>
        <begin position="288"/>
        <end position="508"/>
    </location>
</feature>
<feature type="region of interest" description="Disordered" evidence="3">
    <location>
        <begin position="416"/>
        <end position="436"/>
    </location>
</feature>
<feature type="coiled-coil region" evidence="1">
    <location>
        <begin position="181"/>
        <end position="269"/>
    </location>
</feature>
<feature type="glycosylation site" description="N-linked (GlcNAc...) asparagine" evidence="1">
    <location>
        <position position="105"/>
    </location>
</feature>
<feature type="glycosylation site" description="N-linked (GlcNAc...) asparagine" evidence="1">
    <location>
        <position position="135"/>
    </location>
</feature>
<feature type="glycosylation site" description="N-linked (GlcNAc...) asparagine" evidence="1">
    <location>
        <position position="149"/>
    </location>
</feature>
<feature type="glycosylation site" description="N-linked (GlcNAc...) asparagine" evidence="1">
    <location>
        <position position="167"/>
    </location>
</feature>
<feature type="glycosylation site" description="N-linked (GlcNAc...) asparagine" evidence="1">
    <location>
        <position position="256"/>
    </location>
</feature>
<feature type="glycosylation site" description="N-linked (GlcNAc...) asparagine" evidence="1">
    <location>
        <position position="306"/>
    </location>
</feature>
<feature type="glycosylation site" description="N-linked (GlcNAc...) asparagine" evidence="1">
    <location>
        <position position="317"/>
    </location>
</feature>
<feature type="glycosylation site" description="N-linked (GlcNAc...) asparagine" evidence="1">
    <location>
        <position position="417"/>
    </location>
</feature>
<feature type="disulfide bond" evidence="2">
    <location>
        <begin position="297"/>
        <end position="326"/>
    </location>
</feature>
<feature type="disulfide bond" evidence="2">
    <location>
        <begin position="450"/>
        <end position="463"/>
    </location>
</feature>
<comment type="function">
    <text evidence="4">Binds to TEK/TIE2, modulating ANGPT1 signaling. Can induce tyrosine phosphorylation of TEK/TIE2. Promotes endothelial cell survival, migration and angiogenesis.</text>
</comment>
<comment type="subunit">
    <text evidence="4">Homodimer; disulfide-linked. Interacts with TEK/TIE2.</text>
</comment>
<comment type="subcellular location">
    <subcellularLocation>
        <location evidence="5">Secreted</location>
    </subcellularLocation>
</comment>
<comment type="tissue specificity">
    <text>Widely expressed.</text>
</comment>
<accession>Q9WVH6</accession>
<name>ANGP4_MOUSE</name>
<dbReference type="EMBL" id="AF113707">
    <property type="protein sequence ID" value="AAD21586.1"/>
    <property type="molecule type" value="mRNA"/>
</dbReference>
<dbReference type="CCDS" id="CCDS16874.1"/>
<dbReference type="RefSeq" id="NP_033771.1">
    <property type="nucleotide sequence ID" value="NM_009641.2"/>
</dbReference>
<dbReference type="SMR" id="Q9WVH6"/>
<dbReference type="BioGRID" id="198024">
    <property type="interactions" value="1"/>
</dbReference>
<dbReference type="FunCoup" id="Q9WVH6">
    <property type="interactions" value="806"/>
</dbReference>
<dbReference type="IntAct" id="Q9WVH6">
    <property type="interactions" value="1"/>
</dbReference>
<dbReference type="STRING" id="10090.ENSMUSP00000028955"/>
<dbReference type="GlyCosmos" id="Q9WVH6">
    <property type="glycosylation" value="8 sites, No reported glycans"/>
</dbReference>
<dbReference type="GlyGen" id="Q9WVH6">
    <property type="glycosylation" value="8 sites"/>
</dbReference>
<dbReference type="iPTMnet" id="Q9WVH6"/>
<dbReference type="PhosphoSitePlus" id="Q9WVH6"/>
<dbReference type="PaxDb" id="10090-ENSMUSP00000028955"/>
<dbReference type="ProteomicsDB" id="282105"/>
<dbReference type="Antibodypedia" id="23019">
    <property type="antibodies" value="279 antibodies from 27 providers"/>
</dbReference>
<dbReference type="DNASU" id="11602"/>
<dbReference type="Ensembl" id="ENSMUST00000028955.6">
    <property type="protein sequence ID" value="ENSMUSP00000028955.6"/>
    <property type="gene ID" value="ENSMUSG00000027460.8"/>
</dbReference>
<dbReference type="GeneID" id="11602"/>
<dbReference type="KEGG" id="mmu:11602"/>
<dbReference type="UCSC" id="uc008neq.1">
    <property type="organism name" value="mouse"/>
</dbReference>
<dbReference type="AGR" id="MGI:1336887"/>
<dbReference type="CTD" id="51378"/>
<dbReference type="MGI" id="MGI:1336887">
    <property type="gene designation" value="Angpt4"/>
</dbReference>
<dbReference type="VEuPathDB" id="HostDB:ENSMUSG00000027460"/>
<dbReference type="eggNOG" id="KOG2579">
    <property type="taxonomic scope" value="Eukaryota"/>
</dbReference>
<dbReference type="GeneTree" id="ENSGT00940000160129"/>
<dbReference type="HOGENOM" id="CLU_038628_3_1_1"/>
<dbReference type="InParanoid" id="Q9WVH6"/>
<dbReference type="OMA" id="HAPDNKY"/>
<dbReference type="OrthoDB" id="9933375at2759"/>
<dbReference type="PhylomeDB" id="Q9WVH6"/>
<dbReference type="TreeFam" id="TF336658"/>
<dbReference type="Reactome" id="R-MMU-210993">
    <property type="pathway name" value="Tie2 Signaling"/>
</dbReference>
<dbReference type="BioGRID-ORCS" id="11602">
    <property type="hits" value="1 hit in 77 CRISPR screens"/>
</dbReference>
<dbReference type="ChiTaRS" id="Angpt4">
    <property type="organism name" value="mouse"/>
</dbReference>
<dbReference type="PRO" id="PR:Q9WVH6"/>
<dbReference type="Proteomes" id="UP000000589">
    <property type="component" value="Chromosome 2"/>
</dbReference>
<dbReference type="RNAct" id="Q9WVH6">
    <property type="molecule type" value="protein"/>
</dbReference>
<dbReference type="Bgee" id="ENSMUSG00000027460">
    <property type="expression patterns" value="Expressed in decidua and 75 other cell types or tissues"/>
</dbReference>
<dbReference type="ExpressionAtlas" id="Q9WVH6">
    <property type="expression patterns" value="baseline and differential"/>
</dbReference>
<dbReference type="GO" id="GO:0005615">
    <property type="term" value="C:extracellular space"/>
    <property type="evidence" value="ECO:0007669"/>
    <property type="project" value="Ensembl"/>
</dbReference>
<dbReference type="GO" id="GO:0030971">
    <property type="term" value="F:receptor tyrosine kinase binding"/>
    <property type="evidence" value="ECO:0007669"/>
    <property type="project" value="Ensembl"/>
</dbReference>
<dbReference type="GO" id="GO:0030297">
    <property type="term" value="F:transmembrane receptor protein tyrosine kinase activator activity"/>
    <property type="evidence" value="ECO:0007669"/>
    <property type="project" value="Ensembl"/>
</dbReference>
<dbReference type="GO" id="GO:0005172">
    <property type="term" value="F:vascular endothelial growth factor receptor binding"/>
    <property type="evidence" value="ECO:0000304"/>
    <property type="project" value="MGI"/>
</dbReference>
<dbReference type="GO" id="GO:0001525">
    <property type="term" value="P:angiogenesis"/>
    <property type="evidence" value="ECO:0007669"/>
    <property type="project" value="UniProtKB-KW"/>
</dbReference>
<dbReference type="GO" id="GO:0007596">
    <property type="term" value="P:blood coagulation"/>
    <property type="evidence" value="ECO:0007669"/>
    <property type="project" value="InterPro"/>
</dbReference>
<dbReference type="GO" id="GO:0071456">
    <property type="term" value="P:cellular response to hypoxia"/>
    <property type="evidence" value="ECO:0007669"/>
    <property type="project" value="Ensembl"/>
</dbReference>
<dbReference type="GO" id="GO:0007492">
    <property type="term" value="P:endoderm development"/>
    <property type="evidence" value="ECO:0000304"/>
    <property type="project" value="MGI"/>
</dbReference>
<dbReference type="GO" id="GO:0016525">
    <property type="term" value="P:negative regulation of angiogenesis"/>
    <property type="evidence" value="ECO:0007669"/>
    <property type="project" value="Ensembl"/>
</dbReference>
<dbReference type="GO" id="GO:0043066">
    <property type="term" value="P:negative regulation of apoptotic process"/>
    <property type="evidence" value="ECO:0007669"/>
    <property type="project" value="Ensembl"/>
</dbReference>
<dbReference type="GO" id="GO:0043537">
    <property type="term" value="P:negative regulation of blood vessel endothelial cell migration"/>
    <property type="evidence" value="ECO:0007669"/>
    <property type="project" value="Ensembl"/>
</dbReference>
<dbReference type="GO" id="GO:0007219">
    <property type="term" value="P:Notch signaling pathway"/>
    <property type="evidence" value="ECO:0000314"/>
    <property type="project" value="MGI"/>
</dbReference>
<dbReference type="GO" id="GO:0045766">
    <property type="term" value="P:positive regulation of angiogenesis"/>
    <property type="evidence" value="ECO:0007669"/>
    <property type="project" value="Ensembl"/>
</dbReference>
<dbReference type="GO" id="GO:0043536">
    <property type="term" value="P:positive regulation of blood vessel endothelial cell migration"/>
    <property type="evidence" value="ECO:0007669"/>
    <property type="project" value="Ensembl"/>
</dbReference>
<dbReference type="GO" id="GO:0048014">
    <property type="term" value="P:Tie signaling pathway"/>
    <property type="evidence" value="ECO:0000304"/>
    <property type="project" value="DFLAT"/>
</dbReference>
<dbReference type="CDD" id="cd00087">
    <property type="entry name" value="FReD"/>
    <property type="match status" value="1"/>
</dbReference>
<dbReference type="FunFam" id="4.10.530.10:FF:000001">
    <property type="entry name" value="angiopoietin-2 isoform X1"/>
    <property type="match status" value="1"/>
</dbReference>
<dbReference type="FunFam" id="3.90.215.10:FF:000001">
    <property type="entry name" value="Tenascin isoform 1"/>
    <property type="match status" value="1"/>
</dbReference>
<dbReference type="Gene3D" id="3.90.215.10">
    <property type="entry name" value="Gamma Fibrinogen, chain A, domain 1"/>
    <property type="match status" value="1"/>
</dbReference>
<dbReference type="InterPro" id="IPR037579">
    <property type="entry name" value="FIB_ANG-like"/>
</dbReference>
<dbReference type="InterPro" id="IPR036056">
    <property type="entry name" value="Fibrinogen-like_C"/>
</dbReference>
<dbReference type="InterPro" id="IPR014716">
    <property type="entry name" value="Fibrinogen_a/b/g_C_1"/>
</dbReference>
<dbReference type="InterPro" id="IPR002181">
    <property type="entry name" value="Fibrinogen_a/b/g_C_dom"/>
</dbReference>
<dbReference type="InterPro" id="IPR020837">
    <property type="entry name" value="Fibrinogen_CS"/>
</dbReference>
<dbReference type="NCBIfam" id="NF040941">
    <property type="entry name" value="GGGWT_bact"/>
    <property type="match status" value="1"/>
</dbReference>
<dbReference type="PANTHER" id="PTHR47221">
    <property type="entry name" value="FIBRINOGEN ALPHA CHAIN"/>
    <property type="match status" value="1"/>
</dbReference>
<dbReference type="PANTHER" id="PTHR47221:SF6">
    <property type="entry name" value="FIBRINOGEN ALPHA CHAIN"/>
    <property type="match status" value="1"/>
</dbReference>
<dbReference type="Pfam" id="PF25443">
    <property type="entry name" value="ANG-1"/>
    <property type="match status" value="1"/>
</dbReference>
<dbReference type="Pfam" id="PF00147">
    <property type="entry name" value="Fibrinogen_C"/>
    <property type="match status" value="1"/>
</dbReference>
<dbReference type="SMART" id="SM00186">
    <property type="entry name" value="FBG"/>
    <property type="match status" value="1"/>
</dbReference>
<dbReference type="SUPFAM" id="SSF56496">
    <property type="entry name" value="Fibrinogen C-terminal domain-like"/>
    <property type="match status" value="1"/>
</dbReference>
<dbReference type="PROSITE" id="PS00514">
    <property type="entry name" value="FIBRINOGEN_C_1"/>
    <property type="match status" value="1"/>
</dbReference>
<dbReference type="PROSITE" id="PS51406">
    <property type="entry name" value="FIBRINOGEN_C_2"/>
    <property type="match status" value="1"/>
</dbReference>
<evidence type="ECO:0000255" key="1"/>
<evidence type="ECO:0000255" key="2">
    <source>
        <dbReference type="PROSITE-ProRule" id="PRU00739"/>
    </source>
</evidence>
<evidence type="ECO:0000256" key="3">
    <source>
        <dbReference type="SAM" id="MobiDB-lite"/>
    </source>
</evidence>
<evidence type="ECO:0000269" key="4">
    <source>
    </source>
</evidence>
<evidence type="ECO:0000305" key="5"/>